<feature type="signal peptide" evidence="1">
    <location>
        <begin position="1"/>
        <end position="24"/>
    </location>
</feature>
<feature type="chain" id="PRO_0000009504" description="Flagellar P-ring protein">
    <location>
        <begin position="25"/>
        <end position="368"/>
    </location>
</feature>
<sequence>MDKPMKRIFVVLVILLVLPQLALAIRIKDIASFDGVRDNQLIGYGLIVGLNGTGDSDQTKFPVQSLANVLERMGITVNRDDIKVKNVAAVMVTAELPPFSKQGTRVDVLVSSLGDAKSLAGGTLLMTPLKGADGQVYAVAQGGLLTNSFSYGGQAATAQKNHPTAGRIPNGALVERELPNVLADRSQLRLNLHQPDFTTATRIARAVNEQFKAGVASCNDPGSVVISLPDAYQGRVVEFVADMERLEVRPDNPAKVVLNERTGTIVIGENVRIDTVAVSHGNLTLLIKETPRVSQPQPLSRTGETVVVPRTGIKVSEESGGLAVLREGASIGDVVRALNALGVTPRDLIGILQAIKAAGAMQAELSVI</sequence>
<accession>Q748F5</accession>
<protein>
    <recommendedName>
        <fullName evidence="1">Flagellar P-ring protein</fullName>
    </recommendedName>
    <alternativeName>
        <fullName evidence="1">Basal body P-ring protein</fullName>
    </alternativeName>
</protein>
<dbReference type="EMBL" id="AE017180">
    <property type="protein sequence ID" value="AAR36439.1"/>
    <property type="molecule type" value="Genomic_DNA"/>
</dbReference>
<dbReference type="RefSeq" id="NP_954089.1">
    <property type="nucleotide sequence ID" value="NC_002939.5"/>
</dbReference>
<dbReference type="RefSeq" id="WP_010943673.1">
    <property type="nucleotide sequence ID" value="NC_002939.5"/>
</dbReference>
<dbReference type="SMR" id="Q748F5"/>
<dbReference type="FunCoup" id="Q748F5">
    <property type="interactions" value="58"/>
</dbReference>
<dbReference type="STRING" id="243231.GSU3047"/>
<dbReference type="EnsemblBacteria" id="AAR36439">
    <property type="protein sequence ID" value="AAR36439"/>
    <property type="gene ID" value="GSU3047"/>
</dbReference>
<dbReference type="KEGG" id="gsu:GSU3047"/>
<dbReference type="PATRIC" id="fig|243231.5.peg.3071"/>
<dbReference type="eggNOG" id="COG1706">
    <property type="taxonomic scope" value="Bacteria"/>
</dbReference>
<dbReference type="HOGENOM" id="CLU_045235_1_0_7"/>
<dbReference type="InParanoid" id="Q748F5"/>
<dbReference type="OrthoDB" id="9786431at2"/>
<dbReference type="Proteomes" id="UP000000577">
    <property type="component" value="Chromosome"/>
</dbReference>
<dbReference type="GO" id="GO:0009428">
    <property type="term" value="C:bacterial-type flagellum basal body, distal rod, P ring"/>
    <property type="evidence" value="ECO:0000318"/>
    <property type="project" value="GO_Central"/>
</dbReference>
<dbReference type="GO" id="GO:0030288">
    <property type="term" value="C:outer membrane-bounded periplasmic space"/>
    <property type="evidence" value="ECO:0007669"/>
    <property type="project" value="InterPro"/>
</dbReference>
<dbReference type="GO" id="GO:0005198">
    <property type="term" value="F:structural molecule activity"/>
    <property type="evidence" value="ECO:0007669"/>
    <property type="project" value="InterPro"/>
</dbReference>
<dbReference type="GO" id="GO:0071973">
    <property type="term" value="P:bacterial-type flagellum-dependent cell motility"/>
    <property type="evidence" value="ECO:0000318"/>
    <property type="project" value="GO_Central"/>
</dbReference>
<dbReference type="HAMAP" id="MF_00416">
    <property type="entry name" value="FlgI"/>
    <property type="match status" value="1"/>
</dbReference>
<dbReference type="InterPro" id="IPR001782">
    <property type="entry name" value="Flag_FlgI"/>
</dbReference>
<dbReference type="NCBIfam" id="NF003676">
    <property type="entry name" value="PRK05303.1"/>
    <property type="match status" value="1"/>
</dbReference>
<dbReference type="PANTHER" id="PTHR30381">
    <property type="entry name" value="FLAGELLAR P-RING PERIPLASMIC PROTEIN FLGI"/>
    <property type="match status" value="1"/>
</dbReference>
<dbReference type="PANTHER" id="PTHR30381:SF0">
    <property type="entry name" value="FLAGELLAR P-RING PROTEIN"/>
    <property type="match status" value="1"/>
</dbReference>
<dbReference type="Pfam" id="PF02119">
    <property type="entry name" value="FlgI"/>
    <property type="match status" value="1"/>
</dbReference>
<dbReference type="PRINTS" id="PR01010">
    <property type="entry name" value="FLGPRINGFLGI"/>
</dbReference>
<gene>
    <name evidence="1" type="primary">flgI</name>
    <name type="ordered locus">GSU3047</name>
</gene>
<name>FLGI_GEOSL</name>
<organism>
    <name type="scientific">Geobacter sulfurreducens (strain ATCC 51573 / DSM 12127 / PCA)</name>
    <dbReference type="NCBI Taxonomy" id="243231"/>
    <lineage>
        <taxon>Bacteria</taxon>
        <taxon>Pseudomonadati</taxon>
        <taxon>Thermodesulfobacteriota</taxon>
        <taxon>Desulfuromonadia</taxon>
        <taxon>Geobacterales</taxon>
        <taxon>Geobacteraceae</taxon>
        <taxon>Geobacter</taxon>
    </lineage>
</organism>
<proteinExistence type="inferred from homology"/>
<reference key="1">
    <citation type="journal article" date="2003" name="Science">
        <title>Genome of Geobacter sulfurreducens: metal reduction in subsurface environments.</title>
        <authorList>
            <person name="Methe B.A."/>
            <person name="Nelson K.E."/>
            <person name="Eisen J.A."/>
            <person name="Paulsen I.T."/>
            <person name="Nelson W.C."/>
            <person name="Heidelberg J.F."/>
            <person name="Wu D."/>
            <person name="Wu M."/>
            <person name="Ward N.L."/>
            <person name="Beanan M.J."/>
            <person name="Dodson R.J."/>
            <person name="Madupu R."/>
            <person name="Brinkac L.M."/>
            <person name="Daugherty S.C."/>
            <person name="DeBoy R.T."/>
            <person name="Durkin A.S."/>
            <person name="Gwinn M.L."/>
            <person name="Kolonay J.F."/>
            <person name="Sullivan S.A."/>
            <person name="Haft D.H."/>
            <person name="Selengut J."/>
            <person name="Davidsen T.M."/>
            <person name="Zafar N."/>
            <person name="White O."/>
            <person name="Tran B."/>
            <person name="Romero C."/>
            <person name="Forberger H.A."/>
            <person name="Weidman J.F."/>
            <person name="Khouri H.M."/>
            <person name="Feldblyum T.V."/>
            <person name="Utterback T.R."/>
            <person name="Van Aken S.E."/>
            <person name="Lovley D.R."/>
            <person name="Fraser C.M."/>
        </authorList>
    </citation>
    <scope>NUCLEOTIDE SEQUENCE [LARGE SCALE GENOMIC DNA]</scope>
    <source>
        <strain>ATCC 51573 / DSM 12127 / PCA</strain>
    </source>
</reference>
<keyword id="KW-0975">Bacterial flagellum</keyword>
<keyword id="KW-0574">Periplasm</keyword>
<keyword id="KW-1185">Reference proteome</keyword>
<keyword id="KW-0732">Signal</keyword>
<evidence type="ECO:0000255" key="1">
    <source>
        <dbReference type="HAMAP-Rule" id="MF_00416"/>
    </source>
</evidence>
<comment type="function">
    <text evidence="1">Assembles around the rod to form the L-ring and probably protects the motor/basal body from shearing forces during rotation.</text>
</comment>
<comment type="subunit">
    <text evidence="1">The basal body constitutes a major portion of the flagellar organelle and consists of four rings (L,P,S, and M) mounted on a central rod.</text>
</comment>
<comment type="subcellular location">
    <subcellularLocation>
        <location evidence="1">Periplasm</location>
    </subcellularLocation>
    <subcellularLocation>
        <location evidence="1">Bacterial flagellum basal body</location>
    </subcellularLocation>
</comment>
<comment type="similarity">
    <text evidence="1">Belongs to the FlgI family.</text>
</comment>